<feature type="transit peptide" description="Mitochondrion">
    <location>
        <begin position="1"/>
        <end status="unknown"/>
    </location>
</feature>
<feature type="chain" id="PRO_0000000993" description="Adrenodoxin-like protein 1, mitochondrial">
    <location>
        <begin status="unknown"/>
        <end position="172"/>
    </location>
</feature>
<feature type="domain" description="2Fe-2S ferredoxin-type" evidence="2">
    <location>
        <begin position="57"/>
        <end position="159"/>
    </location>
</feature>
<feature type="binding site" evidence="2">
    <location>
        <position position="94"/>
    </location>
    <ligand>
        <name>[2Fe-2S] cluster</name>
        <dbReference type="ChEBI" id="CHEBI:190135"/>
    </ligand>
</feature>
<feature type="binding site" evidence="2">
    <location>
        <position position="100"/>
    </location>
    <ligand>
        <name>[2Fe-2S] cluster</name>
        <dbReference type="ChEBI" id="CHEBI:190135"/>
    </ligand>
</feature>
<feature type="binding site" evidence="2">
    <location>
        <position position="103"/>
    </location>
    <ligand>
        <name>[2Fe-2S] cluster</name>
        <dbReference type="ChEBI" id="CHEBI:190135"/>
    </ligand>
</feature>
<feature type="binding site" evidence="2">
    <location>
        <position position="140"/>
    </location>
    <ligand>
        <name>[2Fe-2S] cluster</name>
        <dbReference type="ChEBI" id="CHEBI:190135"/>
    </ligand>
</feature>
<feature type="sequence conflict" description="In Ref. 4; AAM29625." evidence="5" ref="4">
    <original>N</original>
    <variation>D</variation>
    <location>
        <position position="161"/>
    </location>
</feature>
<reference key="1">
    <citation type="journal article" date="1987" name="J. Mol. Biol.">
        <title>A Drosophila heat shock gene from locus 67B is expressed during embryogenesis and pupation.</title>
        <authorList>
            <person name="Pauli D."/>
            <person name="Tonka C.H."/>
        </authorList>
    </citation>
    <scope>NUCLEOTIDE SEQUENCE [GENOMIC DNA]</scope>
</reference>
<reference key="2">
    <citation type="journal article" date="2000" name="Science">
        <title>The genome sequence of Drosophila melanogaster.</title>
        <authorList>
            <person name="Adams M.D."/>
            <person name="Celniker S.E."/>
            <person name="Holt R.A."/>
            <person name="Evans C.A."/>
            <person name="Gocayne J.D."/>
            <person name="Amanatides P.G."/>
            <person name="Scherer S.E."/>
            <person name="Li P.W."/>
            <person name="Hoskins R.A."/>
            <person name="Galle R.F."/>
            <person name="George R.A."/>
            <person name="Lewis S.E."/>
            <person name="Richards S."/>
            <person name="Ashburner M."/>
            <person name="Henderson S.N."/>
            <person name="Sutton G.G."/>
            <person name="Wortman J.R."/>
            <person name="Yandell M.D."/>
            <person name="Zhang Q."/>
            <person name="Chen L.X."/>
            <person name="Brandon R.C."/>
            <person name="Rogers Y.-H.C."/>
            <person name="Blazej R.G."/>
            <person name="Champe M."/>
            <person name="Pfeiffer B.D."/>
            <person name="Wan K.H."/>
            <person name="Doyle C."/>
            <person name="Baxter E.G."/>
            <person name="Helt G."/>
            <person name="Nelson C.R."/>
            <person name="Miklos G.L.G."/>
            <person name="Abril J.F."/>
            <person name="Agbayani A."/>
            <person name="An H.-J."/>
            <person name="Andrews-Pfannkoch C."/>
            <person name="Baldwin D."/>
            <person name="Ballew R.M."/>
            <person name="Basu A."/>
            <person name="Baxendale J."/>
            <person name="Bayraktaroglu L."/>
            <person name="Beasley E.M."/>
            <person name="Beeson K.Y."/>
            <person name="Benos P.V."/>
            <person name="Berman B.P."/>
            <person name="Bhandari D."/>
            <person name="Bolshakov S."/>
            <person name="Borkova D."/>
            <person name="Botchan M.R."/>
            <person name="Bouck J."/>
            <person name="Brokstein P."/>
            <person name="Brottier P."/>
            <person name="Burtis K.C."/>
            <person name="Busam D.A."/>
            <person name="Butler H."/>
            <person name="Cadieu E."/>
            <person name="Center A."/>
            <person name="Chandra I."/>
            <person name="Cherry J.M."/>
            <person name="Cawley S."/>
            <person name="Dahlke C."/>
            <person name="Davenport L.B."/>
            <person name="Davies P."/>
            <person name="de Pablos B."/>
            <person name="Delcher A."/>
            <person name="Deng Z."/>
            <person name="Mays A.D."/>
            <person name="Dew I."/>
            <person name="Dietz S.M."/>
            <person name="Dodson K."/>
            <person name="Doup L.E."/>
            <person name="Downes M."/>
            <person name="Dugan-Rocha S."/>
            <person name="Dunkov B.C."/>
            <person name="Dunn P."/>
            <person name="Durbin K.J."/>
            <person name="Evangelista C.C."/>
            <person name="Ferraz C."/>
            <person name="Ferriera S."/>
            <person name="Fleischmann W."/>
            <person name="Fosler C."/>
            <person name="Gabrielian A.E."/>
            <person name="Garg N.S."/>
            <person name="Gelbart W.M."/>
            <person name="Glasser K."/>
            <person name="Glodek A."/>
            <person name="Gong F."/>
            <person name="Gorrell J.H."/>
            <person name="Gu Z."/>
            <person name="Guan P."/>
            <person name="Harris M."/>
            <person name="Harris N.L."/>
            <person name="Harvey D.A."/>
            <person name="Heiman T.J."/>
            <person name="Hernandez J.R."/>
            <person name="Houck J."/>
            <person name="Hostin D."/>
            <person name="Houston K.A."/>
            <person name="Howland T.J."/>
            <person name="Wei M.-H."/>
            <person name="Ibegwam C."/>
            <person name="Jalali M."/>
            <person name="Kalush F."/>
            <person name="Karpen G.H."/>
            <person name="Ke Z."/>
            <person name="Kennison J.A."/>
            <person name="Ketchum K.A."/>
            <person name="Kimmel B.E."/>
            <person name="Kodira C.D."/>
            <person name="Kraft C.L."/>
            <person name="Kravitz S."/>
            <person name="Kulp D."/>
            <person name="Lai Z."/>
            <person name="Lasko P."/>
            <person name="Lei Y."/>
            <person name="Levitsky A.A."/>
            <person name="Li J.H."/>
            <person name="Li Z."/>
            <person name="Liang Y."/>
            <person name="Lin X."/>
            <person name="Liu X."/>
            <person name="Mattei B."/>
            <person name="McIntosh T.C."/>
            <person name="McLeod M.P."/>
            <person name="McPherson D."/>
            <person name="Merkulov G."/>
            <person name="Milshina N.V."/>
            <person name="Mobarry C."/>
            <person name="Morris J."/>
            <person name="Moshrefi A."/>
            <person name="Mount S.M."/>
            <person name="Moy M."/>
            <person name="Murphy B."/>
            <person name="Murphy L."/>
            <person name="Muzny D.M."/>
            <person name="Nelson D.L."/>
            <person name="Nelson D.R."/>
            <person name="Nelson K.A."/>
            <person name="Nixon K."/>
            <person name="Nusskern D.R."/>
            <person name="Pacleb J.M."/>
            <person name="Palazzolo M."/>
            <person name="Pittman G.S."/>
            <person name="Pan S."/>
            <person name="Pollard J."/>
            <person name="Puri V."/>
            <person name="Reese M.G."/>
            <person name="Reinert K."/>
            <person name="Remington K."/>
            <person name="Saunders R.D.C."/>
            <person name="Scheeler F."/>
            <person name="Shen H."/>
            <person name="Shue B.C."/>
            <person name="Siden-Kiamos I."/>
            <person name="Simpson M."/>
            <person name="Skupski M.P."/>
            <person name="Smith T.J."/>
            <person name="Spier E."/>
            <person name="Spradling A.C."/>
            <person name="Stapleton M."/>
            <person name="Strong R."/>
            <person name="Sun E."/>
            <person name="Svirskas R."/>
            <person name="Tector C."/>
            <person name="Turner R."/>
            <person name="Venter E."/>
            <person name="Wang A.H."/>
            <person name="Wang X."/>
            <person name="Wang Z.-Y."/>
            <person name="Wassarman D.A."/>
            <person name="Weinstock G.M."/>
            <person name="Weissenbach J."/>
            <person name="Williams S.M."/>
            <person name="Woodage T."/>
            <person name="Worley K.C."/>
            <person name="Wu D."/>
            <person name="Yang S."/>
            <person name="Yao Q.A."/>
            <person name="Ye J."/>
            <person name="Yeh R.-F."/>
            <person name="Zaveri J.S."/>
            <person name="Zhan M."/>
            <person name="Zhang G."/>
            <person name="Zhao Q."/>
            <person name="Zheng L."/>
            <person name="Zheng X.H."/>
            <person name="Zhong F.N."/>
            <person name="Zhong W."/>
            <person name="Zhou X."/>
            <person name="Zhu S.C."/>
            <person name="Zhu X."/>
            <person name="Smith H.O."/>
            <person name="Gibbs R.A."/>
            <person name="Myers E.W."/>
            <person name="Rubin G.M."/>
            <person name="Venter J.C."/>
        </authorList>
    </citation>
    <scope>NUCLEOTIDE SEQUENCE [LARGE SCALE GENOMIC DNA]</scope>
    <source>
        <strain>Berkeley</strain>
    </source>
</reference>
<reference key="3">
    <citation type="journal article" date="2002" name="Genome Biol.">
        <title>Annotation of the Drosophila melanogaster euchromatic genome: a systematic review.</title>
        <authorList>
            <person name="Misra S."/>
            <person name="Crosby M.A."/>
            <person name="Mungall C.J."/>
            <person name="Matthews B.B."/>
            <person name="Campbell K.S."/>
            <person name="Hradecky P."/>
            <person name="Huang Y."/>
            <person name="Kaminker J.S."/>
            <person name="Millburn G.H."/>
            <person name="Prochnik S.E."/>
            <person name="Smith C.D."/>
            <person name="Tupy J.L."/>
            <person name="Whitfield E.J."/>
            <person name="Bayraktaroglu L."/>
            <person name="Berman B.P."/>
            <person name="Bettencourt B.R."/>
            <person name="Celniker S.E."/>
            <person name="de Grey A.D.N.J."/>
            <person name="Drysdale R.A."/>
            <person name="Harris N.L."/>
            <person name="Richter J."/>
            <person name="Russo S."/>
            <person name="Schroeder A.J."/>
            <person name="Shu S.Q."/>
            <person name="Stapleton M."/>
            <person name="Yamada C."/>
            <person name="Ashburner M."/>
            <person name="Gelbart W.M."/>
            <person name="Rubin G.M."/>
            <person name="Lewis S.E."/>
        </authorList>
    </citation>
    <scope>GENOME REANNOTATION</scope>
    <source>
        <strain>Berkeley</strain>
    </source>
</reference>
<reference key="4">
    <citation type="journal article" date="2002" name="Genome Biol.">
        <title>A Drosophila full-length cDNA resource.</title>
        <authorList>
            <person name="Stapleton M."/>
            <person name="Carlson J.W."/>
            <person name="Brokstein P."/>
            <person name="Yu C."/>
            <person name="Champe M."/>
            <person name="George R.A."/>
            <person name="Guarin H."/>
            <person name="Kronmiller B."/>
            <person name="Pacleb J.M."/>
            <person name="Park S."/>
            <person name="Wan K.H."/>
            <person name="Rubin G.M."/>
            <person name="Celniker S.E."/>
        </authorList>
    </citation>
    <scope>NUCLEOTIDE SEQUENCE [LARGE SCALE MRNA]</scope>
    <source>
        <strain>Berkeley</strain>
        <tissue>Head</tissue>
    </source>
</reference>
<reference key="5">
    <citation type="unpublished observations" date="1994-07">
        <authorList>
            <person name="Rudd K.E."/>
        </authorList>
    </citation>
    <scope>IDENTIFICATION</scope>
</reference>
<reference key="6">
    <citation type="journal article" date="2015" name="Hum. Mol. Genet.">
        <title>Frataxin inactivation leads to steroid deficiency in flies and human ovarian cells.</title>
        <authorList>
            <person name="Palandri A."/>
            <person name="L'hote D."/>
            <person name="Cohen-Tannoudji J."/>
            <person name="Tricoire H."/>
            <person name="Monnier V."/>
        </authorList>
    </citation>
    <scope>FUNCTION</scope>
    <scope>DISRUPTION PHENOTYPE</scope>
</reference>
<organism>
    <name type="scientific">Drosophila melanogaster</name>
    <name type="common">Fruit fly</name>
    <dbReference type="NCBI Taxonomy" id="7227"/>
    <lineage>
        <taxon>Eukaryota</taxon>
        <taxon>Metazoa</taxon>
        <taxon>Ecdysozoa</taxon>
        <taxon>Arthropoda</taxon>
        <taxon>Hexapoda</taxon>
        <taxon>Insecta</taxon>
        <taxon>Pterygota</taxon>
        <taxon>Neoptera</taxon>
        <taxon>Endopterygota</taxon>
        <taxon>Diptera</taxon>
        <taxon>Brachycera</taxon>
        <taxon>Muscomorpha</taxon>
        <taxon>Ephydroidea</taxon>
        <taxon>Drosophilidae</taxon>
        <taxon>Drosophila</taxon>
        <taxon>Sophophora</taxon>
    </lineage>
</organism>
<name>ADXH1_DROME</name>
<sequence>MFCLLLRRSAVHNSCKLISKQIAKPAFYTPHNALHTTIPRRHGEFEWQDPKSTDEIVNITYVDKDGKRTKVQGKVGDNVLYLAHRHGIEMEGACEASLACTTCHVYVQHDYLQKLKEAEEQEDDLLDMAPFLRENSRLGCQILLDKSMEGMELELPKATRNFYVDGHKPKPH</sequence>
<protein>
    <recommendedName>
        <fullName evidence="5">Adrenodoxin-like protein 1, mitochondrial</fullName>
    </recommendedName>
    <alternativeName>
        <fullName evidence="6">Ferredoxin-1</fullName>
    </alternativeName>
</protein>
<proteinExistence type="evidence at transcript level"/>
<dbReference type="EMBL" id="X06542">
    <property type="protein sequence ID" value="CAB55551.1"/>
    <property type="status" value="ALT_SEQ"/>
    <property type="molecule type" value="Genomic_DNA"/>
</dbReference>
<dbReference type="EMBL" id="AE014296">
    <property type="protein sequence ID" value="AAF50293.2"/>
    <property type="molecule type" value="Genomic_DNA"/>
</dbReference>
<dbReference type="EMBL" id="AY113620">
    <property type="protein sequence ID" value="AAM29625.1"/>
    <property type="molecule type" value="mRNA"/>
</dbReference>
<dbReference type="RefSeq" id="NP_001189075.1">
    <property type="nucleotide sequence ID" value="NM_001202146.1"/>
</dbReference>
<dbReference type="RefSeq" id="NP_523993.1">
    <property type="nucleotide sequence ID" value="NM_079269.3"/>
</dbReference>
<dbReference type="SMR" id="P37193"/>
<dbReference type="FunCoup" id="P37193">
    <property type="interactions" value="584"/>
</dbReference>
<dbReference type="STRING" id="7227.FBpp0292527"/>
<dbReference type="PaxDb" id="7227-FBpp0292527"/>
<dbReference type="EnsemblMetazoa" id="FBtr0076498">
    <property type="protein sequence ID" value="FBpp0076226"/>
    <property type="gene ID" value="FBgn0011769"/>
</dbReference>
<dbReference type="EnsemblMetazoa" id="FBtr0303475">
    <property type="protein sequence ID" value="FBpp0292527"/>
    <property type="gene ID" value="FBgn0011769"/>
</dbReference>
<dbReference type="GeneID" id="39070"/>
<dbReference type="KEGG" id="dme:Dmel_CG4205"/>
<dbReference type="UCSC" id="CG4205-RA">
    <property type="organism name" value="d. melanogaster"/>
</dbReference>
<dbReference type="AGR" id="FB:FBgn0011769"/>
<dbReference type="CTD" id="2230"/>
<dbReference type="FlyBase" id="FBgn0011769">
    <property type="gene designation" value="Fdx1"/>
</dbReference>
<dbReference type="VEuPathDB" id="VectorBase:FBgn0011769"/>
<dbReference type="eggNOG" id="KOG3309">
    <property type="taxonomic scope" value="Eukaryota"/>
</dbReference>
<dbReference type="GeneTree" id="ENSGT00940000161143"/>
<dbReference type="HOGENOM" id="CLU_082632_0_2_1"/>
<dbReference type="InParanoid" id="P37193"/>
<dbReference type="OMA" id="TLGWGWR"/>
<dbReference type="OrthoDB" id="268593at2759"/>
<dbReference type="PhylomeDB" id="P37193"/>
<dbReference type="Reactome" id="R-DME-1362409">
    <property type="pathway name" value="Mitochondrial iron-sulfur cluster biogenesis"/>
</dbReference>
<dbReference type="Reactome" id="R-DME-2395516">
    <property type="pathway name" value="Electron transport from NADPH to Ferredoxin"/>
</dbReference>
<dbReference type="BioGRID-ORCS" id="39070">
    <property type="hits" value="1 hit in 3 CRISPR screens"/>
</dbReference>
<dbReference type="ChiTaRS" id="Fdx1">
    <property type="organism name" value="fly"/>
</dbReference>
<dbReference type="GenomeRNAi" id="39070"/>
<dbReference type="PRO" id="PR:P37193"/>
<dbReference type="Proteomes" id="UP000000803">
    <property type="component" value="Chromosome 3L"/>
</dbReference>
<dbReference type="Bgee" id="FBgn0011769">
    <property type="expression patterns" value="Expressed in adult middle midgut class II enteroendocrine cell in adult midgut (Drosophila) and 86 other cell types or tissues"/>
</dbReference>
<dbReference type="ExpressionAtlas" id="P37193">
    <property type="expression patterns" value="baseline and differential"/>
</dbReference>
<dbReference type="GO" id="GO:0005759">
    <property type="term" value="C:mitochondrial matrix"/>
    <property type="evidence" value="ECO:0000250"/>
    <property type="project" value="FlyBase"/>
</dbReference>
<dbReference type="GO" id="GO:0005739">
    <property type="term" value="C:mitochondrion"/>
    <property type="evidence" value="ECO:0000250"/>
    <property type="project" value="FlyBase"/>
</dbReference>
<dbReference type="GO" id="GO:0051537">
    <property type="term" value="F:2 iron, 2 sulfur cluster binding"/>
    <property type="evidence" value="ECO:0000250"/>
    <property type="project" value="FlyBase"/>
</dbReference>
<dbReference type="GO" id="GO:0009055">
    <property type="term" value="F:electron transfer activity"/>
    <property type="evidence" value="ECO:0000250"/>
    <property type="project" value="FlyBase"/>
</dbReference>
<dbReference type="GO" id="GO:0046872">
    <property type="term" value="F:metal ion binding"/>
    <property type="evidence" value="ECO:0007669"/>
    <property type="project" value="UniProtKB-KW"/>
</dbReference>
<dbReference type="GO" id="GO:0044571">
    <property type="term" value="P:[2Fe-2S] cluster assembly"/>
    <property type="evidence" value="ECO:0000303"/>
    <property type="project" value="FlyBase"/>
</dbReference>
<dbReference type="GO" id="GO:0022900">
    <property type="term" value="P:electron transport chain"/>
    <property type="evidence" value="ECO:0000318"/>
    <property type="project" value="GO_Central"/>
</dbReference>
<dbReference type="GO" id="GO:0140647">
    <property type="term" value="P:P450-containing electron transport chain"/>
    <property type="evidence" value="ECO:0007669"/>
    <property type="project" value="InterPro"/>
</dbReference>
<dbReference type="GO" id="GO:0045998">
    <property type="term" value="P:positive regulation of ecdysteroid biosynthetic process"/>
    <property type="evidence" value="ECO:0000315"/>
    <property type="project" value="FlyBase"/>
</dbReference>
<dbReference type="GO" id="GO:0006694">
    <property type="term" value="P:steroid biosynthetic process"/>
    <property type="evidence" value="ECO:0007669"/>
    <property type="project" value="UniProtKB-KW"/>
</dbReference>
<dbReference type="GO" id="GO:0006744">
    <property type="term" value="P:ubiquinone biosynthetic process"/>
    <property type="evidence" value="ECO:0000250"/>
    <property type="project" value="FlyBase"/>
</dbReference>
<dbReference type="CDD" id="cd00207">
    <property type="entry name" value="fer2"/>
    <property type="match status" value="1"/>
</dbReference>
<dbReference type="FunFam" id="3.10.20.30:FF:000013">
    <property type="entry name" value="Adrenodoxin, mitochondrial"/>
    <property type="match status" value="1"/>
</dbReference>
<dbReference type="Gene3D" id="3.10.20.30">
    <property type="match status" value="1"/>
</dbReference>
<dbReference type="InterPro" id="IPR036010">
    <property type="entry name" value="2Fe-2S_ferredoxin-like_sf"/>
</dbReference>
<dbReference type="InterPro" id="IPR001041">
    <property type="entry name" value="2Fe-2S_ferredoxin-type"/>
</dbReference>
<dbReference type="InterPro" id="IPR001055">
    <property type="entry name" value="Adrenodoxin-like"/>
</dbReference>
<dbReference type="InterPro" id="IPR018298">
    <property type="entry name" value="Adrenodoxin_Fe-S_BS"/>
</dbReference>
<dbReference type="InterPro" id="IPR012675">
    <property type="entry name" value="Beta-grasp_dom_sf"/>
</dbReference>
<dbReference type="PANTHER" id="PTHR23426:SF65">
    <property type="entry name" value="FERREDOXIN-2, MITOCHONDRIAL"/>
    <property type="match status" value="1"/>
</dbReference>
<dbReference type="PANTHER" id="PTHR23426">
    <property type="entry name" value="FERREDOXIN/ADRENODOXIN"/>
    <property type="match status" value="1"/>
</dbReference>
<dbReference type="Pfam" id="PF00111">
    <property type="entry name" value="Fer2"/>
    <property type="match status" value="1"/>
</dbReference>
<dbReference type="PRINTS" id="PR00355">
    <property type="entry name" value="ADRENODOXIN"/>
</dbReference>
<dbReference type="SUPFAM" id="SSF54292">
    <property type="entry name" value="2Fe-2S ferredoxin-like"/>
    <property type="match status" value="1"/>
</dbReference>
<dbReference type="PROSITE" id="PS51085">
    <property type="entry name" value="2FE2S_FER_2"/>
    <property type="match status" value="1"/>
</dbReference>
<dbReference type="PROSITE" id="PS00814">
    <property type="entry name" value="ADX"/>
    <property type="match status" value="1"/>
</dbReference>
<comment type="function">
    <text evidence="3">Required for ecdysteroidogenesis in the prothoracic gland which is necessary for larval to pupal transition.</text>
</comment>
<comment type="cofactor">
    <cofactor evidence="1">
        <name>[2Fe-2S] cluster</name>
        <dbReference type="ChEBI" id="CHEBI:190135"/>
    </cofactor>
    <text evidence="1">Binds 1 [2Fe-2S] cluster.</text>
</comment>
<comment type="subcellular location">
    <subcellularLocation>
        <location evidence="1">Mitochondrion matrix</location>
    </subcellularLocation>
</comment>
<comment type="disruption phenotype">
    <text evidence="3">RNAi-mediated knockdown in the whole body or in the prothoracic gland results in delayed or absent pupariation.</text>
</comment>
<comment type="similarity">
    <text evidence="5">Belongs to the adrenodoxin/putidaredoxin family.</text>
</comment>
<comment type="sequence caution" evidence="5">
    <conflict type="erroneous gene model prediction">
        <sequence resource="EMBL-CDS" id="CAB55551"/>
    </conflict>
</comment>
<evidence type="ECO:0000250" key="1"/>
<evidence type="ECO:0000255" key="2">
    <source>
        <dbReference type="PROSITE-ProRule" id="PRU00465"/>
    </source>
</evidence>
<evidence type="ECO:0000269" key="3">
    <source>
    </source>
</evidence>
<evidence type="ECO:0000303" key="4">
    <source>
    </source>
</evidence>
<evidence type="ECO:0000305" key="5"/>
<evidence type="ECO:0000312" key="6">
    <source>
        <dbReference type="FlyBase" id="FBgn0011769"/>
    </source>
</evidence>
<keyword id="KW-0001">2Fe-2S</keyword>
<keyword id="KW-0249">Electron transport</keyword>
<keyword id="KW-0408">Iron</keyword>
<keyword id="KW-0411">Iron-sulfur</keyword>
<keyword id="KW-0443">Lipid metabolism</keyword>
<keyword id="KW-0479">Metal-binding</keyword>
<keyword id="KW-0496">Mitochondrion</keyword>
<keyword id="KW-1185">Reference proteome</keyword>
<keyword id="KW-0753">Steroid metabolism</keyword>
<keyword id="KW-0755">Steroidogenesis</keyword>
<keyword id="KW-0809">Transit peptide</keyword>
<keyword id="KW-0813">Transport</keyword>
<gene>
    <name evidence="6" type="primary">Fdx1</name>
    <name evidence="4 6" type="synonym">Fdxh</name>
    <name evidence="6" type="ORF">CG4205</name>
</gene>
<accession>P37193</accession>
<accession>Q8MYT2</accession>
<accession>Q9VSW8</accession>